<comment type="function">
    <text evidence="4">Mu-conotoxins block voltage-gated sodium channels (Nav). Blocks reversibly sodium channels in molluskan neurons, but has no effect on sodium currents in bovine chromaffin cells or in rat brain synaptosomes. Induces paralysis in bivalve mollusks (Mytilus). No effect are observed on fish (Gambusia) and fly larvae (Sarcophaga). Is approximately 6 times more potent than PnIVA in blockade of the sodium current in Lymnaea neurons.</text>
</comment>
<comment type="subcellular location">
    <subcellularLocation>
        <location>Secreted</location>
    </subcellularLocation>
</comment>
<comment type="tissue specificity">
    <text>Expressed by the venom duct.</text>
</comment>
<comment type="domain">
    <text>The cysteine framework is IV (CC-C-C-C-C).</text>
</comment>
<comment type="PTM">
    <text evidence="1">Contains 3 disulfide bonds (By similarity). They are not added, since framework IV presents two different connectivities (I-V, II-III, IV-VI and I-III, II-V, IV-VI).</text>
</comment>
<comment type="mass spectrometry"/>
<comment type="similarity">
    <text evidence="5">Belongs to the conotoxin M superfamily.</text>
</comment>
<evidence type="ECO:0000250" key="1"/>
<evidence type="ECO:0000255" key="2"/>
<evidence type="ECO:0000269" key="3">
    <source>
    </source>
</evidence>
<evidence type="ECO:0000269" key="4">
    <source>
    </source>
</evidence>
<evidence type="ECO:0000305" key="5"/>
<evidence type="ECO:0000305" key="6">
    <source>
    </source>
</evidence>
<sequence>MMSKLGVLLIICLLLCPLTAVPQDGDQPADQPAERMQDDISSEHHPFFDPVKRCCKYGWTCWLGCSPCGC</sequence>
<accession>P58927</accession>
<accession>Q9BH61</accession>
<accession>Q9BP54</accession>
<proteinExistence type="evidence at protein level"/>
<keyword id="KW-0165">Cleavage on pair of basic residues</keyword>
<keyword id="KW-0903">Direct protein sequencing</keyword>
<keyword id="KW-1015">Disulfide bond</keyword>
<keyword id="KW-0872">Ion channel impairing toxin</keyword>
<keyword id="KW-0528">Neurotoxin</keyword>
<keyword id="KW-0964">Secreted</keyword>
<keyword id="KW-0732">Signal</keyword>
<keyword id="KW-0800">Toxin</keyword>
<keyword id="KW-0738">Voltage-gated sodium channel impairing toxin</keyword>
<reference key="1">
    <citation type="journal article" date="2001" name="Mol. Biol. Evol.">
        <title>Mechanisms for evolving hypervariability: the case of conopeptides.</title>
        <authorList>
            <person name="Conticello S.G."/>
            <person name="Gilad Y."/>
            <person name="Avidan N."/>
            <person name="Ben-Asher E."/>
            <person name="Levy Z."/>
            <person name="Fainzilber M."/>
        </authorList>
    </citation>
    <scope>NUCLEOTIDE SEQUENCE [MRNA]</scope>
</reference>
<reference key="2">
    <citation type="journal article" date="1995" name="Biochemistry">
        <title>A new cysteine framework in sodium channel blocking conotoxins.</title>
        <authorList>
            <person name="Fainzilber M."/>
            <person name="Nakamura T."/>
            <person name="Gaathon A."/>
            <person name="Lodder J.C."/>
            <person name="Kits K.S."/>
            <person name="Burlingame A.L."/>
            <person name="Zlotkin E."/>
        </authorList>
    </citation>
    <scope>PROTEIN SEQUENCE OF 54-70</scope>
    <scope>MASS SPECTROMETRY</scope>
    <scope>SUBCELLULAR LOCATION</scope>
    <source>
        <tissue>Venom</tissue>
    </source>
</reference>
<reference key="3">
    <citation type="journal article" date="1995" name="Eur. J. Neurosci.">
        <title>Electrophysiological characterization of a novel conotoxin that blocks molluscan sodium channels.</title>
        <authorList>
            <person name="Hasson A."/>
            <person name="Fainzilber M."/>
            <person name="Zlotkin E."/>
            <person name="Spira M.E."/>
        </authorList>
    </citation>
    <scope>FUNCTION</scope>
</reference>
<dbReference type="EMBL" id="AF214931">
    <property type="protein sequence ID" value="AAG60359.1"/>
    <property type="molecule type" value="mRNA"/>
</dbReference>
<dbReference type="EMBL" id="AF215093">
    <property type="protein sequence ID" value="AAG60514.1"/>
    <property type="molecule type" value="mRNA"/>
</dbReference>
<dbReference type="EMBL" id="AF215094">
    <property type="protein sequence ID" value="AAG60515.1"/>
    <property type="molecule type" value="mRNA"/>
</dbReference>
<dbReference type="ConoServer" id="1559">
    <property type="toxin name" value="PnIVB"/>
</dbReference>
<dbReference type="ConoServer" id="618">
    <property type="toxin name" value="PnIVB precursor"/>
</dbReference>
<dbReference type="ConoServer" id="771">
    <property type="toxin name" value="PnIVB precursor"/>
</dbReference>
<dbReference type="GO" id="GO:0005576">
    <property type="term" value="C:extracellular region"/>
    <property type="evidence" value="ECO:0007669"/>
    <property type="project" value="UniProtKB-SubCell"/>
</dbReference>
<dbReference type="GO" id="GO:0008200">
    <property type="term" value="F:ion channel inhibitor activity"/>
    <property type="evidence" value="ECO:0007669"/>
    <property type="project" value="InterPro"/>
</dbReference>
<dbReference type="GO" id="GO:0017080">
    <property type="term" value="F:sodium channel regulator activity"/>
    <property type="evidence" value="ECO:0007669"/>
    <property type="project" value="UniProtKB-KW"/>
</dbReference>
<dbReference type="GO" id="GO:0090729">
    <property type="term" value="F:toxin activity"/>
    <property type="evidence" value="ECO:0007669"/>
    <property type="project" value="UniProtKB-KW"/>
</dbReference>
<dbReference type="InterPro" id="IPR004214">
    <property type="entry name" value="Conotoxin"/>
</dbReference>
<dbReference type="Pfam" id="PF02950">
    <property type="entry name" value="Conotoxin"/>
    <property type="match status" value="1"/>
</dbReference>
<protein>
    <recommendedName>
        <fullName>Mu-conotoxin PnIVB</fullName>
    </recommendedName>
</protein>
<organism>
    <name type="scientific">Conus pennaceus</name>
    <name type="common">Feathered cone</name>
    <name type="synonym">Conus episcopus</name>
    <dbReference type="NCBI Taxonomy" id="37335"/>
    <lineage>
        <taxon>Eukaryota</taxon>
        <taxon>Metazoa</taxon>
        <taxon>Spiralia</taxon>
        <taxon>Lophotrochozoa</taxon>
        <taxon>Mollusca</taxon>
        <taxon>Gastropoda</taxon>
        <taxon>Caenogastropoda</taxon>
        <taxon>Neogastropoda</taxon>
        <taxon>Conoidea</taxon>
        <taxon>Conidae</taxon>
        <taxon>Conus</taxon>
        <taxon>Darioconus</taxon>
    </lineage>
</organism>
<name>CM4B_CONPE</name>
<feature type="signal peptide" evidence="2">
    <location>
        <begin position="1"/>
        <end position="20"/>
    </location>
</feature>
<feature type="propeptide" id="PRO_0000392725" evidence="6">
    <location>
        <begin position="21"/>
        <end position="51"/>
    </location>
</feature>
<feature type="peptide" id="PRO_0000044497" description="Mu-conotoxin PnIVB" evidence="3">
    <location>
        <begin position="54"/>
        <end position="70"/>
    </location>
</feature>
<feature type="site" description="Important for binding and activity" evidence="1">
    <location>
        <position position="57"/>
    </location>
</feature>